<evidence type="ECO:0000255" key="1">
    <source>
        <dbReference type="HAMAP-Rule" id="MF_01411"/>
    </source>
</evidence>
<sequence>MSLTSRSLLATMISLALYGPAMANENNKLSEDVNDELALTSDNADEIELVRGVCIAPQDRSTDPNNDPIKVTADHAEALDKTKVTYTGDVVVQQGNRTIAADQAYLRQPENIVVAEGNVYFHDGTIEVDSERLQSDLDTEDSEMDHAVYNLTCEPGRGEARRITKTHAQGTQFYRMKDGTYTTCPAEDNSWRFSATTLEREGDSPFANLYNARFEVLDVPVFYLPYLRVPVGKERLTGFLYPSVSYGSRDGFEFETPFYWNIAPNYDLTLTPKYMSNRGLQLNTDFRYLTEFGQGSLKGEYLASDKAADNNDSRWAFNYSHNGTYKSNWLFDVDYSKTSDFNYFTDIDSSIGNREDNNLLQTAEVSYREQYWDSTLRVRDFQPLTETGQGSQYRLMPQLEFNYYRPNLPYELDFSMASSISSFANDASNKPDATRVHLEPTLTLPFATPWWSLTSEAKLLYTYYNQDLKSYSRDGIEETVSRTIPTARIHSGLYLERDTSIWGQDYTQSLEPQIQYLYVQDKDQSGIYNPVNDDGGGYDSTRLQQDYYGLFSDKTYSSVDYVAPANQFTVGASTRYFDGNFKERFTLSLGQIFYIDKPTVDDEVESYSATALETEFNYADWLFFKSSMQYDASDKEVQIANGAIEYRENGVYIQPNYRYVSSSYLDKYVTNPNSVNDDGDQDGISQLGLSTGFPLNGGLSVRADYFHDLNVNKMVEGQVGLTYRSACWLIGLTYNKYASSSLGSSNTEYDNNVSLTFSLLGLQGAKPFGASSDTSNAMSYGNSFSLNN</sequence>
<feature type="signal peptide" evidence="1">
    <location>
        <begin position="1"/>
        <end position="23"/>
    </location>
</feature>
<feature type="chain" id="PRO_0000281622" description="LPS-assembly protein LptD">
    <location>
        <begin position="24"/>
        <end position="788"/>
    </location>
</feature>
<protein>
    <recommendedName>
        <fullName evidence="1">LPS-assembly protein LptD</fullName>
    </recommendedName>
</protein>
<keyword id="KW-0998">Cell outer membrane</keyword>
<keyword id="KW-0472">Membrane</keyword>
<keyword id="KW-1185">Reference proteome</keyword>
<keyword id="KW-0732">Signal</keyword>
<organism>
    <name type="scientific">Photobacterium profundum (strain SS9)</name>
    <dbReference type="NCBI Taxonomy" id="298386"/>
    <lineage>
        <taxon>Bacteria</taxon>
        <taxon>Pseudomonadati</taxon>
        <taxon>Pseudomonadota</taxon>
        <taxon>Gammaproteobacteria</taxon>
        <taxon>Vibrionales</taxon>
        <taxon>Vibrionaceae</taxon>
        <taxon>Photobacterium</taxon>
    </lineage>
</organism>
<accession>Q6LV38</accession>
<dbReference type="EMBL" id="CR378664">
    <property type="protein sequence ID" value="CAG18837.1"/>
    <property type="molecule type" value="Genomic_DNA"/>
</dbReference>
<dbReference type="RefSeq" id="WP_011217194.1">
    <property type="nucleotide sequence ID" value="NC_006370.1"/>
</dbReference>
<dbReference type="SMR" id="Q6LV38"/>
<dbReference type="STRING" id="298386.PBPRA0405"/>
<dbReference type="KEGG" id="ppr:PBPRA0405"/>
<dbReference type="eggNOG" id="COG1452">
    <property type="taxonomic scope" value="Bacteria"/>
</dbReference>
<dbReference type="HOGENOM" id="CLU_009039_0_0_6"/>
<dbReference type="Proteomes" id="UP000000593">
    <property type="component" value="Chromosome 1"/>
</dbReference>
<dbReference type="GO" id="GO:0009279">
    <property type="term" value="C:cell outer membrane"/>
    <property type="evidence" value="ECO:0007669"/>
    <property type="project" value="UniProtKB-SubCell"/>
</dbReference>
<dbReference type="GO" id="GO:1990351">
    <property type="term" value="C:transporter complex"/>
    <property type="evidence" value="ECO:0007669"/>
    <property type="project" value="TreeGrafter"/>
</dbReference>
<dbReference type="GO" id="GO:0043165">
    <property type="term" value="P:Gram-negative-bacterium-type cell outer membrane assembly"/>
    <property type="evidence" value="ECO:0007669"/>
    <property type="project" value="UniProtKB-UniRule"/>
</dbReference>
<dbReference type="GO" id="GO:0015920">
    <property type="term" value="P:lipopolysaccharide transport"/>
    <property type="evidence" value="ECO:0007669"/>
    <property type="project" value="InterPro"/>
</dbReference>
<dbReference type="Gene3D" id="2.60.450.10">
    <property type="entry name" value="Lipopolysaccharide (LPS) transport protein A like domain"/>
    <property type="match status" value="1"/>
</dbReference>
<dbReference type="HAMAP" id="MF_01411">
    <property type="entry name" value="LPS_assembly_LptD"/>
    <property type="match status" value="1"/>
</dbReference>
<dbReference type="InterPro" id="IPR020889">
    <property type="entry name" value="LipoPS_assembly_LptD"/>
</dbReference>
<dbReference type="InterPro" id="IPR050218">
    <property type="entry name" value="LptD"/>
</dbReference>
<dbReference type="InterPro" id="IPR007543">
    <property type="entry name" value="LptD_C"/>
</dbReference>
<dbReference type="InterPro" id="IPR005653">
    <property type="entry name" value="OstA-like_N"/>
</dbReference>
<dbReference type="NCBIfam" id="NF002997">
    <property type="entry name" value="PRK03761.1"/>
    <property type="match status" value="1"/>
</dbReference>
<dbReference type="PANTHER" id="PTHR30189">
    <property type="entry name" value="LPS-ASSEMBLY PROTEIN"/>
    <property type="match status" value="1"/>
</dbReference>
<dbReference type="PANTHER" id="PTHR30189:SF1">
    <property type="entry name" value="LPS-ASSEMBLY PROTEIN LPTD"/>
    <property type="match status" value="1"/>
</dbReference>
<dbReference type="Pfam" id="PF04453">
    <property type="entry name" value="LptD"/>
    <property type="match status" value="1"/>
</dbReference>
<dbReference type="Pfam" id="PF03968">
    <property type="entry name" value="LptD_N"/>
    <property type="match status" value="1"/>
</dbReference>
<proteinExistence type="inferred from homology"/>
<gene>
    <name evidence="1" type="primary">lptD</name>
    <name type="synonym">imp</name>
    <name type="synonym">ostA</name>
    <name type="ordered locus">PBPRA0405</name>
</gene>
<comment type="function">
    <text evidence="1">Together with LptE, is involved in the assembly of lipopolysaccharide (LPS) at the surface of the outer membrane.</text>
</comment>
<comment type="subunit">
    <text evidence="1">Component of the lipopolysaccharide transport and assembly complex. Interacts with LptE and LptA.</text>
</comment>
<comment type="subcellular location">
    <subcellularLocation>
        <location evidence="1">Cell outer membrane</location>
    </subcellularLocation>
</comment>
<comment type="similarity">
    <text evidence="1">Belongs to the LptD family.</text>
</comment>
<name>LPTD_PHOPR</name>
<reference key="1">
    <citation type="journal article" date="2005" name="Science">
        <title>Life at depth: Photobacterium profundum genome sequence and expression analysis.</title>
        <authorList>
            <person name="Vezzi A."/>
            <person name="Campanaro S."/>
            <person name="D'Angelo M."/>
            <person name="Simonato F."/>
            <person name="Vitulo N."/>
            <person name="Lauro F.M."/>
            <person name="Cestaro A."/>
            <person name="Malacrida G."/>
            <person name="Simionati B."/>
            <person name="Cannata N."/>
            <person name="Romualdi C."/>
            <person name="Bartlett D.H."/>
            <person name="Valle G."/>
        </authorList>
    </citation>
    <scope>NUCLEOTIDE SEQUENCE [LARGE SCALE GENOMIC DNA]</scope>
    <source>
        <strain>ATCC BAA-1253 / SS9</strain>
    </source>
</reference>